<feature type="initiator methionine" description="Removed" evidence="2">
    <location>
        <position position="1"/>
    </location>
</feature>
<feature type="chain" id="PRO_0000174832" description="Co-chaperonin GroES">
    <location>
        <begin position="2"/>
        <end position="95"/>
    </location>
</feature>
<protein>
    <recommendedName>
        <fullName evidence="1">Co-chaperonin GroES</fullName>
    </recommendedName>
    <alternativeName>
        <fullName evidence="1">10 kDa chaperonin</fullName>
    </alternativeName>
    <alternativeName>
        <fullName>10 kDa heat shock protein</fullName>
    </alternativeName>
    <alternativeName>
        <fullName evidence="1">Chaperonin-10</fullName>
        <shortName evidence="1">Cpn10</shortName>
    </alternativeName>
    <alternativeName>
        <fullName>HSP10</fullName>
    </alternativeName>
</protein>
<evidence type="ECO:0000255" key="1">
    <source>
        <dbReference type="HAMAP-Rule" id="MF_00580"/>
    </source>
</evidence>
<evidence type="ECO:0000269" key="2">
    <source ref="3"/>
</evidence>
<evidence type="ECO:0000305" key="3"/>
<name>CH10_RICTY</name>
<accession>P80469</accession>
<accession>Q8VQ18</accession>
<sequence>MSFKPLHDRIAIKPIENEEKTKGGIIIPDTAKEKPMQGEIVAVGNGVLNKNGEIYPLELKVGDKVLYGKWAGTEIEIKGEKLIVMKESDVFGIIN</sequence>
<comment type="function">
    <text evidence="1">Together with the chaperonin GroEL, plays an essential role in assisting protein folding. The GroEL-GroES system forms a nano-cage that allows encapsulation of the non-native substrate proteins and provides a physical environment optimized to promote and accelerate protein folding. GroES binds to the apical surface of the GroEL ring, thereby capping the opening of the GroEL channel.</text>
</comment>
<comment type="subunit">
    <text evidence="1">Heptamer of 7 subunits arranged in a ring. Interacts with the chaperonin GroEL.</text>
</comment>
<comment type="subcellular location">
    <subcellularLocation>
        <location evidence="1">Cytoplasm</location>
    </subcellularLocation>
</comment>
<comment type="induction">
    <text>By heat shock.</text>
</comment>
<comment type="similarity">
    <text evidence="1 3">Belongs to the GroES chaperonin family.</text>
</comment>
<reference key="1">
    <citation type="submission" date="2001-12" db="EMBL/GenBank/DDBJ databases">
        <title>Genetic characterization of groESL operon of Rickettsia typhi (Ethiopian).</title>
        <authorList>
            <person name="Radulovic S."/>
            <person name="Rahman M.S."/>
            <person name="Beier M.S."/>
            <person name="Azad A.F."/>
        </authorList>
    </citation>
    <scope>NUCLEOTIDE SEQUENCE [GENOMIC DNA]</scope>
    <source>
        <strain>Ethiopian AZ322</strain>
    </source>
</reference>
<reference key="2">
    <citation type="journal article" date="2004" name="J. Bacteriol.">
        <title>Complete genome sequence of Rickettsia typhi and comparison with sequences of other Rickettsiae.</title>
        <authorList>
            <person name="McLeod M.P."/>
            <person name="Qin X."/>
            <person name="Karpathy S.E."/>
            <person name="Gioia J."/>
            <person name="Highlander S.K."/>
            <person name="Fox G.E."/>
            <person name="McNeill T.Z."/>
            <person name="Jiang H."/>
            <person name="Muzny D."/>
            <person name="Jacob L.S."/>
            <person name="Hawes A.C."/>
            <person name="Sodergren E."/>
            <person name="Gill R."/>
            <person name="Hume J."/>
            <person name="Morgan M."/>
            <person name="Fan G."/>
            <person name="Amin A.G."/>
            <person name="Gibbs R.A."/>
            <person name="Hong C."/>
            <person name="Yu X.-J."/>
            <person name="Walker D.H."/>
            <person name="Weinstock G.M."/>
        </authorList>
    </citation>
    <scope>NUCLEOTIDE SEQUENCE [LARGE SCALE GENOMIC DNA]</scope>
    <source>
        <strain>ATCC VR-144 / Wilmington</strain>
    </source>
</reference>
<reference key="3">
    <citation type="submission" date="1995-02" db="UniProtKB">
        <authorList>
            <person name="Wu Y."/>
            <person name="Dasch G.A."/>
            <person name="Ching W.-M."/>
        </authorList>
    </citation>
    <scope>PROTEIN SEQUENCE OF 2-95</scope>
    <source>
        <strain>ATCC VR-144 / Wilmington</strain>
    </source>
</reference>
<organism>
    <name type="scientific">Rickettsia typhi (strain ATCC VR-144 / Wilmington)</name>
    <dbReference type="NCBI Taxonomy" id="257363"/>
    <lineage>
        <taxon>Bacteria</taxon>
        <taxon>Pseudomonadati</taxon>
        <taxon>Pseudomonadota</taxon>
        <taxon>Alphaproteobacteria</taxon>
        <taxon>Rickettsiales</taxon>
        <taxon>Rickettsiaceae</taxon>
        <taxon>Rickettsieae</taxon>
        <taxon>Rickettsia</taxon>
        <taxon>typhus group</taxon>
    </lineage>
</organism>
<keyword id="KW-0143">Chaperone</keyword>
<keyword id="KW-0963">Cytoplasm</keyword>
<keyword id="KW-0903">Direct protein sequencing</keyword>
<keyword id="KW-0346">Stress response</keyword>
<proteinExistence type="evidence at protein level"/>
<gene>
    <name evidence="1" type="primary">groES</name>
    <name evidence="1" type="synonym">groS</name>
    <name type="ordered locus">RT0618</name>
</gene>
<dbReference type="EMBL" id="AF462073">
    <property type="protein sequence ID" value="AAL67575.1"/>
    <property type="molecule type" value="Genomic_DNA"/>
</dbReference>
<dbReference type="EMBL" id="AE017197">
    <property type="protein sequence ID" value="AAU04082.1"/>
    <property type="molecule type" value="Genomic_DNA"/>
</dbReference>
<dbReference type="RefSeq" id="WP_011191062.1">
    <property type="nucleotide sequence ID" value="NC_006142.1"/>
</dbReference>
<dbReference type="SMR" id="P80469"/>
<dbReference type="KEGG" id="rty:RT0618"/>
<dbReference type="eggNOG" id="COG0234">
    <property type="taxonomic scope" value="Bacteria"/>
</dbReference>
<dbReference type="HOGENOM" id="CLU_132825_1_0_5"/>
<dbReference type="OrthoDB" id="9806791at2"/>
<dbReference type="Proteomes" id="UP000000604">
    <property type="component" value="Chromosome"/>
</dbReference>
<dbReference type="GO" id="GO:0005737">
    <property type="term" value="C:cytoplasm"/>
    <property type="evidence" value="ECO:0007669"/>
    <property type="project" value="UniProtKB-SubCell"/>
</dbReference>
<dbReference type="GO" id="GO:0005524">
    <property type="term" value="F:ATP binding"/>
    <property type="evidence" value="ECO:0007669"/>
    <property type="project" value="InterPro"/>
</dbReference>
<dbReference type="GO" id="GO:0046872">
    <property type="term" value="F:metal ion binding"/>
    <property type="evidence" value="ECO:0007669"/>
    <property type="project" value="TreeGrafter"/>
</dbReference>
<dbReference type="GO" id="GO:0044183">
    <property type="term" value="F:protein folding chaperone"/>
    <property type="evidence" value="ECO:0007669"/>
    <property type="project" value="InterPro"/>
</dbReference>
<dbReference type="GO" id="GO:0051087">
    <property type="term" value="F:protein-folding chaperone binding"/>
    <property type="evidence" value="ECO:0007669"/>
    <property type="project" value="TreeGrafter"/>
</dbReference>
<dbReference type="GO" id="GO:0051082">
    <property type="term" value="F:unfolded protein binding"/>
    <property type="evidence" value="ECO:0007669"/>
    <property type="project" value="TreeGrafter"/>
</dbReference>
<dbReference type="GO" id="GO:0051085">
    <property type="term" value="P:chaperone cofactor-dependent protein refolding"/>
    <property type="evidence" value="ECO:0007669"/>
    <property type="project" value="TreeGrafter"/>
</dbReference>
<dbReference type="CDD" id="cd00320">
    <property type="entry name" value="cpn10"/>
    <property type="match status" value="1"/>
</dbReference>
<dbReference type="FunFam" id="2.30.33.40:FF:000001">
    <property type="entry name" value="10 kDa chaperonin"/>
    <property type="match status" value="1"/>
</dbReference>
<dbReference type="Gene3D" id="2.30.33.40">
    <property type="entry name" value="GroES chaperonin"/>
    <property type="match status" value="1"/>
</dbReference>
<dbReference type="HAMAP" id="MF_00580">
    <property type="entry name" value="CH10"/>
    <property type="match status" value="1"/>
</dbReference>
<dbReference type="InterPro" id="IPR020818">
    <property type="entry name" value="Chaperonin_GroES"/>
</dbReference>
<dbReference type="InterPro" id="IPR037124">
    <property type="entry name" value="Chaperonin_GroES_sf"/>
</dbReference>
<dbReference type="InterPro" id="IPR018369">
    <property type="entry name" value="Chaprnonin_Cpn10_CS"/>
</dbReference>
<dbReference type="InterPro" id="IPR011032">
    <property type="entry name" value="GroES-like_sf"/>
</dbReference>
<dbReference type="NCBIfam" id="NF001527">
    <property type="entry name" value="PRK00364.1-2"/>
    <property type="match status" value="1"/>
</dbReference>
<dbReference type="NCBIfam" id="NF001529">
    <property type="entry name" value="PRK00364.1-5"/>
    <property type="match status" value="1"/>
</dbReference>
<dbReference type="NCBIfam" id="NF001531">
    <property type="entry name" value="PRK00364.2-2"/>
    <property type="match status" value="1"/>
</dbReference>
<dbReference type="NCBIfam" id="NF001533">
    <property type="entry name" value="PRK00364.2-4"/>
    <property type="match status" value="1"/>
</dbReference>
<dbReference type="PANTHER" id="PTHR10772">
    <property type="entry name" value="10 KDA HEAT SHOCK PROTEIN"/>
    <property type="match status" value="1"/>
</dbReference>
<dbReference type="PANTHER" id="PTHR10772:SF58">
    <property type="entry name" value="CO-CHAPERONIN GROES"/>
    <property type="match status" value="1"/>
</dbReference>
<dbReference type="Pfam" id="PF00166">
    <property type="entry name" value="Cpn10"/>
    <property type="match status" value="1"/>
</dbReference>
<dbReference type="PRINTS" id="PR00297">
    <property type="entry name" value="CHAPERONIN10"/>
</dbReference>
<dbReference type="SMART" id="SM00883">
    <property type="entry name" value="Cpn10"/>
    <property type="match status" value="1"/>
</dbReference>
<dbReference type="SUPFAM" id="SSF50129">
    <property type="entry name" value="GroES-like"/>
    <property type="match status" value="1"/>
</dbReference>
<dbReference type="PROSITE" id="PS00681">
    <property type="entry name" value="CHAPERONINS_CPN10"/>
    <property type="match status" value="1"/>
</dbReference>